<reference key="1">
    <citation type="journal article" date="2009" name="J. Bacteriol.">
        <title>Genomic sequencing reveals regulatory mutations and recombinational events in the widely used MC4100 lineage of Escherichia coli K-12.</title>
        <authorList>
            <person name="Ferenci T."/>
            <person name="Zhou Z."/>
            <person name="Betteridge T."/>
            <person name="Ren Y."/>
            <person name="Liu Y."/>
            <person name="Feng L."/>
            <person name="Reeves P.R."/>
            <person name="Wang L."/>
        </authorList>
    </citation>
    <scope>NUCLEOTIDE SEQUENCE [LARGE SCALE GENOMIC DNA]</scope>
    <source>
        <strain>K12 / MC4100 / BW2952</strain>
    </source>
</reference>
<sequence length="77" mass="8673">MPHIDIKCFPRELDEQQKAALAADITDVIIRHLNSKDSSISIALQQIQPESWQAIWDAEIAPQMEALIKKPGYSMNA</sequence>
<proteinExistence type="inferred from homology"/>
<evidence type="ECO:0000255" key="1">
    <source>
        <dbReference type="HAMAP-Rule" id="MF_00718"/>
    </source>
</evidence>
<keyword id="KW-0963">Cytoplasm</keyword>
<keyword id="KW-0413">Isomerase</keyword>
<name>PPTA_ECOBW</name>
<protein>
    <recommendedName>
        <fullName evidence="1">Tautomerase PptA</fullName>
        <ecNumber evidence="1">5.3.2.-</ecNumber>
    </recommendedName>
</protein>
<accession>C4ZWN2</accession>
<feature type="initiator methionine" description="Removed" evidence="1">
    <location>
        <position position="1"/>
    </location>
</feature>
<feature type="chain" id="PRO_1000212685" description="Tautomerase PptA">
    <location>
        <begin position="2"/>
        <end position="77"/>
    </location>
</feature>
<feature type="active site" description="Proton acceptor; via imino nitrogen" evidence="1">
    <location>
        <position position="2"/>
    </location>
</feature>
<dbReference type="EC" id="5.3.2.-" evidence="1"/>
<dbReference type="EMBL" id="CP001396">
    <property type="protein sequence ID" value="ACR61844.1"/>
    <property type="molecule type" value="Genomic_DNA"/>
</dbReference>
<dbReference type="RefSeq" id="WP_001120143.1">
    <property type="nucleotide sequence ID" value="NC_012759.1"/>
</dbReference>
<dbReference type="SMR" id="C4ZWN2"/>
<dbReference type="KEGG" id="ebw:BWG_1284"/>
<dbReference type="HOGENOM" id="CLU_183611_0_1_6"/>
<dbReference type="GO" id="GO:0005737">
    <property type="term" value="C:cytoplasm"/>
    <property type="evidence" value="ECO:0007669"/>
    <property type="project" value="UniProtKB-SubCell"/>
</dbReference>
<dbReference type="GO" id="GO:0016862">
    <property type="term" value="F:intramolecular oxidoreductase activity, interconverting keto- and enol-groups"/>
    <property type="evidence" value="ECO:0007669"/>
    <property type="project" value="UniProtKB-UniRule"/>
</dbReference>
<dbReference type="Gene3D" id="3.30.429.10">
    <property type="entry name" value="Macrophage Migration Inhibitory Factor"/>
    <property type="match status" value="1"/>
</dbReference>
<dbReference type="HAMAP" id="MF_00718">
    <property type="entry name" value="Tautomerase_PptA"/>
    <property type="match status" value="1"/>
</dbReference>
<dbReference type="InterPro" id="IPR004370">
    <property type="entry name" value="4-OT-like_dom"/>
</dbReference>
<dbReference type="InterPro" id="IPR014347">
    <property type="entry name" value="Tautomerase/MIF_sf"/>
</dbReference>
<dbReference type="InterPro" id="IPR017284">
    <property type="entry name" value="Tautomerase_PptA"/>
</dbReference>
<dbReference type="NCBIfam" id="NF002324">
    <property type="entry name" value="PRK01271.1"/>
    <property type="match status" value="1"/>
</dbReference>
<dbReference type="Pfam" id="PF01361">
    <property type="entry name" value="Tautomerase"/>
    <property type="match status" value="1"/>
</dbReference>
<dbReference type="PIRSF" id="PIRSF037799">
    <property type="entry name" value="Tautomer_YdcE_prd"/>
    <property type="match status" value="1"/>
</dbReference>
<dbReference type="SUPFAM" id="SSF55331">
    <property type="entry name" value="Tautomerase/MIF"/>
    <property type="match status" value="1"/>
</dbReference>
<organism>
    <name type="scientific">Escherichia coli (strain K12 / MC4100 / BW2952)</name>
    <dbReference type="NCBI Taxonomy" id="595496"/>
    <lineage>
        <taxon>Bacteria</taxon>
        <taxon>Pseudomonadati</taxon>
        <taxon>Pseudomonadota</taxon>
        <taxon>Gammaproteobacteria</taxon>
        <taxon>Enterobacterales</taxon>
        <taxon>Enterobacteriaceae</taxon>
        <taxon>Escherichia</taxon>
    </lineage>
</organism>
<gene>
    <name evidence="1" type="primary">pptA</name>
    <name type="ordered locus">BWG_1284</name>
</gene>
<comment type="subunit">
    <text evidence="1">Homodimer.</text>
</comment>
<comment type="subcellular location">
    <subcellularLocation>
        <location evidence="1">Cytoplasm</location>
    </subcellularLocation>
</comment>
<comment type="similarity">
    <text evidence="1">Belongs to the 4-oxalocrotonate tautomerase family. PptA subfamily.</text>
</comment>